<gene>
    <name evidence="1" type="primary">acpP</name>
    <name type="ordered locus">BF0179</name>
</gene>
<organism>
    <name type="scientific">Bacteroides fragilis (strain ATCC 25285 / DSM 2151 / CCUG 4856 / JCM 11019 / LMG 10263 / NCTC 9343 / Onslow / VPI 2553 / EN-2)</name>
    <dbReference type="NCBI Taxonomy" id="272559"/>
    <lineage>
        <taxon>Bacteria</taxon>
        <taxon>Pseudomonadati</taxon>
        <taxon>Bacteroidota</taxon>
        <taxon>Bacteroidia</taxon>
        <taxon>Bacteroidales</taxon>
        <taxon>Bacteroidaceae</taxon>
        <taxon>Bacteroides</taxon>
    </lineage>
</organism>
<sequence>MSEIASRVKAIIVDKLGVEESEVTETASFTNDLGADSLDTVELIMEFEKEFGISIPDDQAEKIGTVQDAVAYIEEHAK</sequence>
<dbReference type="EMBL" id="CR626927">
    <property type="protein sequence ID" value="CAH05956.1"/>
    <property type="molecule type" value="Genomic_DNA"/>
</dbReference>
<dbReference type="RefSeq" id="WP_005779510.1">
    <property type="nucleotide sequence ID" value="NZ_UFTH01000001.1"/>
</dbReference>
<dbReference type="SMR" id="Q5LIS0"/>
<dbReference type="PaxDb" id="272559-BF9343_0177"/>
<dbReference type="KEGG" id="bfs:BF9343_0177"/>
<dbReference type="eggNOG" id="COG0236">
    <property type="taxonomic scope" value="Bacteria"/>
</dbReference>
<dbReference type="HOGENOM" id="CLU_108696_5_1_10"/>
<dbReference type="UniPathway" id="UPA00094"/>
<dbReference type="Proteomes" id="UP000006731">
    <property type="component" value="Chromosome"/>
</dbReference>
<dbReference type="GO" id="GO:0005829">
    <property type="term" value="C:cytosol"/>
    <property type="evidence" value="ECO:0007669"/>
    <property type="project" value="TreeGrafter"/>
</dbReference>
<dbReference type="GO" id="GO:0016020">
    <property type="term" value="C:membrane"/>
    <property type="evidence" value="ECO:0007669"/>
    <property type="project" value="GOC"/>
</dbReference>
<dbReference type="GO" id="GO:0000035">
    <property type="term" value="F:acyl binding"/>
    <property type="evidence" value="ECO:0007669"/>
    <property type="project" value="TreeGrafter"/>
</dbReference>
<dbReference type="GO" id="GO:0000036">
    <property type="term" value="F:acyl carrier activity"/>
    <property type="evidence" value="ECO:0007669"/>
    <property type="project" value="UniProtKB-UniRule"/>
</dbReference>
<dbReference type="GO" id="GO:0031177">
    <property type="term" value="F:phosphopantetheine binding"/>
    <property type="evidence" value="ECO:0007669"/>
    <property type="project" value="InterPro"/>
</dbReference>
<dbReference type="GO" id="GO:0009245">
    <property type="term" value="P:lipid A biosynthetic process"/>
    <property type="evidence" value="ECO:0007669"/>
    <property type="project" value="TreeGrafter"/>
</dbReference>
<dbReference type="FunFam" id="1.10.1200.10:FF:000001">
    <property type="entry name" value="Acyl carrier protein"/>
    <property type="match status" value="1"/>
</dbReference>
<dbReference type="Gene3D" id="1.10.1200.10">
    <property type="entry name" value="ACP-like"/>
    <property type="match status" value="1"/>
</dbReference>
<dbReference type="HAMAP" id="MF_01217">
    <property type="entry name" value="Acyl_carrier"/>
    <property type="match status" value="1"/>
</dbReference>
<dbReference type="InterPro" id="IPR003231">
    <property type="entry name" value="ACP"/>
</dbReference>
<dbReference type="InterPro" id="IPR036736">
    <property type="entry name" value="ACP-like_sf"/>
</dbReference>
<dbReference type="InterPro" id="IPR020806">
    <property type="entry name" value="PKS_PP-bd"/>
</dbReference>
<dbReference type="InterPro" id="IPR009081">
    <property type="entry name" value="PP-bd_ACP"/>
</dbReference>
<dbReference type="InterPro" id="IPR006162">
    <property type="entry name" value="Ppantetheine_attach_site"/>
</dbReference>
<dbReference type="NCBIfam" id="TIGR00517">
    <property type="entry name" value="acyl_carrier"/>
    <property type="match status" value="1"/>
</dbReference>
<dbReference type="NCBIfam" id="NF002148">
    <property type="entry name" value="PRK00982.1-2"/>
    <property type="match status" value="1"/>
</dbReference>
<dbReference type="NCBIfam" id="NF002149">
    <property type="entry name" value="PRK00982.1-3"/>
    <property type="match status" value="1"/>
</dbReference>
<dbReference type="NCBIfam" id="NF002150">
    <property type="entry name" value="PRK00982.1-4"/>
    <property type="match status" value="1"/>
</dbReference>
<dbReference type="NCBIfam" id="NF002151">
    <property type="entry name" value="PRK00982.1-5"/>
    <property type="match status" value="1"/>
</dbReference>
<dbReference type="PANTHER" id="PTHR20863">
    <property type="entry name" value="ACYL CARRIER PROTEIN"/>
    <property type="match status" value="1"/>
</dbReference>
<dbReference type="PANTHER" id="PTHR20863:SF76">
    <property type="entry name" value="CARRIER DOMAIN-CONTAINING PROTEIN"/>
    <property type="match status" value="1"/>
</dbReference>
<dbReference type="Pfam" id="PF00550">
    <property type="entry name" value="PP-binding"/>
    <property type="match status" value="1"/>
</dbReference>
<dbReference type="SMART" id="SM00823">
    <property type="entry name" value="PKS_PP"/>
    <property type="match status" value="1"/>
</dbReference>
<dbReference type="SUPFAM" id="SSF47336">
    <property type="entry name" value="ACP-like"/>
    <property type="match status" value="1"/>
</dbReference>
<dbReference type="PROSITE" id="PS50075">
    <property type="entry name" value="CARRIER"/>
    <property type="match status" value="1"/>
</dbReference>
<dbReference type="PROSITE" id="PS00012">
    <property type="entry name" value="PHOSPHOPANTETHEINE"/>
    <property type="match status" value="1"/>
</dbReference>
<protein>
    <recommendedName>
        <fullName evidence="1">Acyl carrier protein</fullName>
        <shortName evidence="1">ACP</shortName>
    </recommendedName>
</protein>
<comment type="function">
    <text evidence="1">Carrier of the growing fatty acid chain in fatty acid biosynthesis.</text>
</comment>
<comment type="pathway">
    <text evidence="1">Lipid metabolism; fatty acid biosynthesis.</text>
</comment>
<comment type="subcellular location">
    <subcellularLocation>
        <location evidence="1">Cytoplasm</location>
    </subcellularLocation>
</comment>
<comment type="PTM">
    <text evidence="1">4'-phosphopantetheine is transferred from CoA to a specific serine of apo-ACP by AcpS. This modification is essential for activity because fatty acids are bound in thioester linkage to the sulfhydryl of the prosthetic group.</text>
</comment>
<comment type="similarity">
    <text evidence="1">Belongs to the acyl carrier protein (ACP) family.</text>
</comment>
<accession>Q5LIS0</accession>
<keyword id="KW-0963">Cytoplasm</keyword>
<keyword id="KW-0275">Fatty acid biosynthesis</keyword>
<keyword id="KW-0276">Fatty acid metabolism</keyword>
<keyword id="KW-0444">Lipid biosynthesis</keyword>
<keyword id="KW-0443">Lipid metabolism</keyword>
<keyword id="KW-0596">Phosphopantetheine</keyword>
<keyword id="KW-0597">Phosphoprotein</keyword>
<proteinExistence type="inferred from homology"/>
<reference key="1">
    <citation type="journal article" date="2005" name="Science">
        <title>Extensive DNA inversions in the B. fragilis genome control variable gene expression.</title>
        <authorList>
            <person name="Cerdeno-Tarraga A.-M."/>
            <person name="Patrick S."/>
            <person name="Crossman L.C."/>
            <person name="Blakely G."/>
            <person name="Abratt V."/>
            <person name="Lennard N."/>
            <person name="Poxton I."/>
            <person name="Duerden B."/>
            <person name="Harris B."/>
            <person name="Quail M.A."/>
            <person name="Barron A."/>
            <person name="Clark L."/>
            <person name="Corton C."/>
            <person name="Doggett J."/>
            <person name="Holden M.T.G."/>
            <person name="Larke N."/>
            <person name="Line A."/>
            <person name="Lord A."/>
            <person name="Norbertczak H."/>
            <person name="Ormond D."/>
            <person name="Price C."/>
            <person name="Rabbinowitsch E."/>
            <person name="Woodward J."/>
            <person name="Barrell B.G."/>
            <person name="Parkhill J."/>
        </authorList>
    </citation>
    <scope>NUCLEOTIDE SEQUENCE [LARGE SCALE GENOMIC DNA]</scope>
    <source>
        <strain>ATCC 25285 / DSM 2151 / CCUG 4856 / JCM 11019 / LMG 10263 / NCTC 9343 / Onslow / VPI 2553 / EN-2</strain>
    </source>
</reference>
<feature type="chain" id="PRO_1000066555" description="Acyl carrier protein">
    <location>
        <begin position="1"/>
        <end position="78"/>
    </location>
</feature>
<feature type="domain" description="Carrier" evidence="2">
    <location>
        <begin position="2"/>
        <end position="77"/>
    </location>
</feature>
<feature type="modified residue" description="O-(pantetheine 4'-phosphoryl)serine" evidence="2">
    <location>
        <position position="37"/>
    </location>
</feature>
<evidence type="ECO:0000255" key="1">
    <source>
        <dbReference type="HAMAP-Rule" id="MF_01217"/>
    </source>
</evidence>
<evidence type="ECO:0000255" key="2">
    <source>
        <dbReference type="PROSITE-ProRule" id="PRU00258"/>
    </source>
</evidence>
<name>ACP_BACFN</name>